<gene>
    <name type="ordered locus">MIMI_R354</name>
</gene>
<accession>Q5UQV1</accession>
<dbReference type="EMBL" id="AY653733">
    <property type="protein sequence ID" value="AAV50623.1"/>
    <property type="molecule type" value="Genomic_DNA"/>
</dbReference>
<dbReference type="PDB" id="5YET">
    <property type="method" value="X-ray"/>
    <property type="resolution" value="2.81 A"/>
    <property type="chains" value="A/B=139-537"/>
</dbReference>
<dbReference type="PDB" id="5YEU">
    <property type="method" value="X-ray"/>
    <property type="resolution" value="3.00 A"/>
    <property type="chains" value="A/B=141-531"/>
</dbReference>
<dbReference type="PDBsum" id="5YET"/>
<dbReference type="PDBsum" id="5YEU"/>
<dbReference type="SMR" id="Q5UQV1"/>
<dbReference type="Proteomes" id="UP000001134">
    <property type="component" value="Genome"/>
</dbReference>
<dbReference type="CDD" id="cd22343">
    <property type="entry name" value="PDDEXK_lambda_exonuclease-like"/>
    <property type="match status" value="1"/>
</dbReference>
<dbReference type="Gene3D" id="3.90.320.10">
    <property type="match status" value="1"/>
</dbReference>
<dbReference type="InterPro" id="IPR017482">
    <property type="entry name" value="Lambda-type_endonuclease"/>
</dbReference>
<dbReference type="InterPro" id="IPR051703">
    <property type="entry name" value="NF-kappa-B_Signaling_Reg"/>
</dbReference>
<dbReference type="InterPro" id="IPR011604">
    <property type="entry name" value="PDDEXK-like_dom_sf"/>
</dbReference>
<dbReference type="InterPro" id="IPR011335">
    <property type="entry name" value="Restrct_endonuc-II-like"/>
</dbReference>
<dbReference type="InterPro" id="IPR019080">
    <property type="entry name" value="YqaJ_viral_recombinase"/>
</dbReference>
<dbReference type="NCBIfam" id="TIGR03033">
    <property type="entry name" value="phage_rel_nuc"/>
    <property type="match status" value="1"/>
</dbReference>
<dbReference type="PANTHER" id="PTHR46609">
    <property type="entry name" value="EXONUCLEASE, PHAGE-TYPE/RECB, C-TERMINAL DOMAIN-CONTAINING PROTEIN"/>
    <property type="match status" value="1"/>
</dbReference>
<dbReference type="PANTHER" id="PTHR46609:SF6">
    <property type="entry name" value="EXONUCLEASE, PHAGE-TYPE_RECB, C-TERMINAL DOMAIN-CONTAINING PROTEIN-RELATED"/>
    <property type="match status" value="1"/>
</dbReference>
<dbReference type="Pfam" id="PF09588">
    <property type="entry name" value="YqaJ"/>
    <property type="match status" value="1"/>
</dbReference>
<dbReference type="SUPFAM" id="SSF52980">
    <property type="entry name" value="Restriction endonuclease-like"/>
    <property type="match status" value="1"/>
</dbReference>
<organismHost>
    <name type="scientific">Acanthamoeba polyphaga</name>
    <name type="common">Amoeba</name>
    <dbReference type="NCBI Taxonomy" id="5757"/>
</organismHost>
<protein>
    <recommendedName>
        <fullName>Uncharacterized protein R354</fullName>
    </recommendedName>
</protein>
<reference key="1">
    <citation type="journal article" date="2004" name="Science">
        <title>The 1.2-megabase genome sequence of Mimivirus.</title>
        <authorList>
            <person name="Raoult D."/>
            <person name="Audic S."/>
            <person name="Robert C."/>
            <person name="Abergel C."/>
            <person name="Renesto P."/>
            <person name="Ogata H."/>
            <person name="La Scola B."/>
            <person name="Susan M."/>
            <person name="Claverie J.-M."/>
        </authorList>
    </citation>
    <scope>NUCLEOTIDE SEQUENCE [LARGE SCALE GENOMIC DNA]</scope>
    <source>
        <strain>Rowbotham-Bradford</strain>
    </source>
</reference>
<keyword id="KW-0002">3D-structure</keyword>
<keyword id="KW-1185">Reference proteome</keyword>
<name>YR354_MIMIV</name>
<sequence length="549" mass="64644">MTDISYYNNEIDKILWNILGDDYFTQDEFDDLVNSVANTIYQYDNEVSIDKLKVIIEFVILNKFKICYIYDNDSILNQVKYEKKSVGSKTIGKNSTNDDEDDDEDIAVIKLSDIEAGENWFKKSPKISSKQFQSVDKVEVATYEDLISHKHDYPKEIYKESHYIRRNTRLDVIKKIPQFEQKSKEWLKQRTESLTATAISVVFDEDPYKHPIVILLDKCGRGLPFVENKFVHHGNKYEQIGTMFYSFRNNVEVGEYGLLQHSGHKFIAASPDGICSKKANTGGLSKLVGRLLEIKFPFSREINNSGDLDGDICPHYYFLQVQTQLYVTEMDECDFLQCKIDEYDSWEDFVKDSNPIVPGLSKTTNLEKGCLIQLSDKNLIGSDDKEKCLYNSKYIYPPKLHMTNEEIEKWISSEIMNYHNNDLSENYMIDRVIYWRLSQVTCNLIKLNKEAFEEKIPLLQQFWDYVLFYRQHSDKLDKLIKFVEKVKEDNSAEIFSYINEDFLSLNKDSKYEPLYQEETEWRKKYNQIKAKKAQMYKNKSYNKYTKFSN</sequence>
<feature type="chain" id="PRO_0000244040" description="Uncharacterized protein R354">
    <location>
        <begin position="1"/>
        <end position="549"/>
    </location>
</feature>
<feature type="helix" evidence="1">
    <location>
        <begin position="143"/>
        <end position="146"/>
    </location>
</feature>
<feature type="strand" evidence="1">
    <location>
        <begin position="152"/>
        <end position="157"/>
    </location>
</feature>
<feature type="helix" evidence="1">
    <location>
        <begin position="161"/>
        <end position="174"/>
    </location>
</feature>
<feature type="helix" evidence="1">
    <location>
        <begin position="185"/>
        <end position="191"/>
    </location>
</feature>
<feature type="helix" evidence="1">
    <location>
        <begin position="196"/>
        <end position="202"/>
    </location>
</feature>
<feature type="helix" evidence="1">
    <location>
        <begin position="211"/>
        <end position="219"/>
    </location>
</feature>
<feature type="helix" evidence="1">
    <location>
        <begin position="229"/>
        <end position="249"/>
    </location>
</feature>
<feature type="strand" evidence="2">
    <location>
        <begin position="251"/>
        <end position="254"/>
    </location>
</feature>
<feature type="strand" evidence="1">
    <location>
        <begin position="262"/>
        <end position="264"/>
    </location>
</feature>
<feature type="strand" evidence="1">
    <location>
        <begin position="267"/>
        <end position="269"/>
    </location>
</feature>
<feature type="strand" evidence="1">
    <location>
        <begin position="272"/>
        <end position="275"/>
    </location>
</feature>
<feature type="strand" evidence="1">
    <location>
        <begin position="282"/>
        <end position="285"/>
    </location>
</feature>
<feature type="turn" evidence="1">
    <location>
        <begin position="286"/>
        <end position="289"/>
    </location>
</feature>
<feature type="strand" evidence="1">
    <location>
        <begin position="291"/>
        <end position="295"/>
    </location>
</feature>
<feature type="strand" evidence="2">
    <location>
        <begin position="298"/>
        <end position="300"/>
    </location>
</feature>
<feature type="strand" evidence="2">
    <location>
        <begin position="304"/>
        <end position="306"/>
    </location>
</feature>
<feature type="helix" evidence="1">
    <location>
        <begin position="308"/>
        <end position="312"/>
    </location>
</feature>
<feature type="helix" evidence="1">
    <location>
        <begin position="315"/>
        <end position="328"/>
    </location>
</feature>
<feature type="strand" evidence="1">
    <location>
        <begin position="331"/>
        <end position="342"/>
    </location>
</feature>
<feature type="helix" evidence="1">
    <location>
        <begin position="346"/>
        <end position="351"/>
    </location>
</feature>
<feature type="turn" evidence="1">
    <location>
        <begin position="362"/>
        <end position="364"/>
    </location>
</feature>
<feature type="strand" evidence="1">
    <location>
        <begin position="366"/>
        <end position="376"/>
    </location>
</feature>
<feature type="turn" evidence="1">
    <location>
        <begin position="377"/>
        <end position="381"/>
    </location>
</feature>
<feature type="helix" evidence="1">
    <location>
        <begin position="385"/>
        <end position="390"/>
    </location>
</feature>
<feature type="strand" evidence="1">
    <location>
        <begin position="393"/>
        <end position="395"/>
    </location>
</feature>
<feature type="strand" evidence="1">
    <location>
        <begin position="398"/>
        <end position="401"/>
    </location>
</feature>
<feature type="helix" evidence="1">
    <location>
        <begin position="404"/>
        <end position="416"/>
    </location>
</feature>
<feature type="helix" evidence="1">
    <location>
        <begin position="418"/>
        <end position="420"/>
    </location>
</feature>
<feature type="helix" evidence="1">
    <location>
        <begin position="422"/>
        <end position="425"/>
    </location>
</feature>
<feature type="strand" evidence="1">
    <location>
        <begin position="427"/>
        <end position="446"/>
    </location>
</feature>
<feature type="helix" evidence="1">
    <location>
        <begin position="449"/>
        <end position="453"/>
    </location>
</feature>
<feature type="helix" evidence="1">
    <location>
        <begin position="456"/>
        <end position="471"/>
    </location>
</feature>
<feature type="helix" evidence="1">
    <location>
        <begin position="473"/>
        <end position="485"/>
    </location>
</feature>
<feature type="helix" evidence="1">
    <location>
        <begin position="491"/>
        <end position="505"/>
    </location>
</feature>
<feature type="helix" evidence="1">
    <location>
        <begin position="520"/>
        <end position="533"/>
    </location>
</feature>
<proteinExistence type="evidence at protein level"/>
<organism>
    <name type="scientific">Acanthamoeba polyphaga mimivirus</name>
    <name type="common">APMV</name>
    <dbReference type="NCBI Taxonomy" id="212035"/>
    <lineage>
        <taxon>Viruses</taxon>
        <taxon>Varidnaviria</taxon>
        <taxon>Bamfordvirae</taxon>
        <taxon>Nucleocytoviricota</taxon>
        <taxon>Megaviricetes</taxon>
        <taxon>Imitervirales</taxon>
        <taxon>Mimiviridae</taxon>
        <taxon>Megamimivirinae</taxon>
        <taxon>Mimivirus</taxon>
        <taxon>Mimivirus bradfordmassiliense</taxon>
    </lineage>
</organism>
<evidence type="ECO:0007829" key="1">
    <source>
        <dbReference type="PDB" id="5YET"/>
    </source>
</evidence>
<evidence type="ECO:0007829" key="2">
    <source>
        <dbReference type="PDB" id="5YEU"/>
    </source>
</evidence>